<gene>
    <name evidence="1" type="primary">folD</name>
    <name type="ordered locus">BPUM_2163</name>
</gene>
<evidence type="ECO:0000255" key="1">
    <source>
        <dbReference type="HAMAP-Rule" id="MF_01576"/>
    </source>
</evidence>
<name>FOLD_BACP2</name>
<organism>
    <name type="scientific">Bacillus pumilus (strain SAFR-032)</name>
    <dbReference type="NCBI Taxonomy" id="315750"/>
    <lineage>
        <taxon>Bacteria</taxon>
        <taxon>Bacillati</taxon>
        <taxon>Bacillota</taxon>
        <taxon>Bacilli</taxon>
        <taxon>Bacillales</taxon>
        <taxon>Bacillaceae</taxon>
        <taxon>Bacillus</taxon>
    </lineage>
</organism>
<dbReference type="EC" id="1.5.1.5" evidence="1"/>
<dbReference type="EC" id="3.5.4.9" evidence="1"/>
<dbReference type="EMBL" id="CP000813">
    <property type="protein sequence ID" value="ABV62832.1"/>
    <property type="molecule type" value="Genomic_DNA"/>
</dbReference>
<dbReference type="RefSeq" id="WP_012010529.1">
    <property type="nucleotide sequence ID" value="NZ_VEIS01000005.1"/>
</dbReference>
<dbReference type="SMR" id="A8FF15"/>
<dbReference type="STRING" id="315750.BPUM_2163"/>
<dbReference type="GeneID" id="5621429"/>
<dbReference type="KEGG" id="bpu:BPUM_2163"/>
<dbReference type="eggNOG" id="COG0190">
    <property type="taxonomic scope" value="Bacteria"/>
</dbReference>
<dbReference type="HOGENOM" id="CLU_034045_2_1_9"/>
<dbReference type="OrthoDB" id="9803580at2"/>
<dbReference type="UniPathway" id="UPA00193"/>
<dbReference type="Proteomes" id="UP000001355">
    <property type="component" value="Chromosome"/>
</dbReference>
<dbReference type="GO" id="GO:0005829">
    <property type="term" value="C:cytosol"/>
    <property type="evidence" value="ECO:0007669"/>
    <property type="project" value="TreeGrafter"/>
</dbReference>
<dbReference type="GO" id="GO:0004477">
    <property type="term" value="F:methenyltetrahydrofolate cyclohydrolase activity"/>
    <property type="evidence" value="ECO:0007669"/>
    <property type="project" value="UniProtKB-UniRule"/>
</dbReference>
<dbReference type="GO" id="GO:0004488">
    <property type="term" value="F:methylenetetrahydrofolate dehydrogenase (NADP+) activity"/>
    <property type="evidence" value="ECO:0007669"/>
    <property type="project" value="UniProtKB-UniRule"/>
</dbReference>
<dbReference type="GO" id="GO:0000105">
    <property type="term" value="P:L-histidine biosynthetic process"/>
    <property type="evidence" value="ECO:0007669"/>
    <property type="project" value="UniProtKB-KW"/>
</dbReference>
<dbReference type="GO" id="GO:0009086">
    <property type="term" value="P:methionine biosynthetic process"/>
    <property type="evidence" value="ECO:0007669"/>
    <property type="project" value="UniProtKB-KW"/>
</dbReference>
<dbReference type="GO" id="GO:0006164">
    <property type="term" value="P:purine nucleotide biosynthetic process"/>
    <property type="evidence" value="ECO:0007669"/>
    <property type="project" value="UniProtKB-KW"/>
</dbReference>
<dbReference type="GO" id="GO:0035999">
    <property type="term" value="P:tetrahydrofolate interconversion"/>
    <property type="evidence" value="ECO:0007669"/>
    <property type="project" value="UniProtKB-UniRule"/>
</dbReference>
<dbReference type="CDD" id="cd01080">
    <property type="entry name" value="NAD_bind_m-THF_DH_Cyclohyd"/>
    <property type="match status" value="1"/>
</dbReference>
<dbReference type="FunFam" id="3.40.50.10860:FF:000001">
    <property type="entry name" value="Bifunctional protein FolD"/>
    <property type="match status" value="1"/>
</dbReference>
<dbReference type="FunFam" id="3.40.50.720:FF:000094">
    <property type="entry name" value="Bifunctional protein FolD"/>
    <property type="match status" value="1"/>
</dbReference>
<dbReference type="Gene3D" id="3.40.50.10860">
    <property type="entry name" value="Leucine Dehydrogenase, chain A, domain 1"/>
    <property type="match status" value="1"/>
</dbReference>
<dbReference type="Gene3D" id="3.40.50.720">
    <property type="entry name" value="NAD(P)-binding Rossmann-like Domain"/>
    <property type="match status" value="1"/>
</dbReference>
<dbReference type="HAMAP" id="MF_01576">
    <property type="entry name" value="THF_DHG_CYH"/>
    <property type="match status" value="1"/>
</dbReference>
<dbReference type="InterPro" id="IPR046346">
    <property type="entry name" value="Aminoacid_DH-like_N_sf"/>
</dbReference>
<dbReference type="InterPro" id="IPR036291">
    <property type="entry name" value="NAD(P)-bd_dom_sf"/>
</dbReference>
<dbReference type="InterPro" id="IPR000672">
    <property type="entry name" value="THF_DH/CycHdrlase"/>
</dbReference>
<dbReference type="InterPro" id="IPR020630">
    <property type="entry name" value="THF_DH/CycHdrlase_cat_dom"/>
</dbReference>
<dbReference type="InterPro" id="IPR020867">
    <property type="entry name" value="THF_DH/CycHdrlase_CS"/>
</dbReference>
<dbReference type="InterPro" id="IPR020631">
    <property type="entry name" value="THF_DH/CycHdrlase_NAD-bd_dom"/>
</dbReference>
<dbReference type="NCBIfam" id="NF008058">
    <property type="entry name" value="PRK10792.1"/>
    <property type="match status" value="1"/>
</dbReference>
<dbReference type="NCBIfam" id="NF010783">
    <property type="entry name" value="PRK14186.1"/>
    <property type="match status" value="1"/>
</dbReference>
<dbReference type="PANTHER" id="PTHR48099:SF5">
    <property type="entry name" value="C-1-TETRAHYDROFOLATE SYNTHASE, CYTOPLASMIC"/>
    <property type="match status" value="1"/>
</dbReference>
<dbReference type="PANTHER" id="PTHR48099">
    <property type="entry name" value="C-1-TETRAHYDROFOLATE SYNTHASE, CYTOPLASMIC-RELATED"/>
    <property type="match status" value="1"/>
</dbReference>
<dbReference type="Pfam" id="PF00763">
    <property type="entry name" value="THF_DHG_CYH"/>
    <property type="match status" value="1"/>
</dbReference>
<dbReference type="Pfam" id="PF02882">
    <property type="entry name" value="THF_DHG_CYH_C"/>
    <property type="match status" value="1"/>
</dbReference>
<dbReference type="PRINTS" id="PR00085">
    <property type="entry name" value="THFDHDRGNASE"/>
</dbReference>
<dbReference type="SUPFAM" id="SSF53223">
    <property type="entry name" value="Aminoacid dehydrogenase-like, N-terminal domain"/>
    <property type="match status" value="1"/>
</dbReference>
<dbReference type="SUPFAM" id="SSF51735">
    <property type="entry name" value="NAD(P)-binding Rossmann-fold domains"/>
    <property type="match status" value="1"/>
</dbReference>
<dbReference type="PROSITE" id="PS00766">
    <property type="entry name" value="THF_DHG_CYH_1"/>
    <property type="match status" value="1"/>
</dbReference>
<dbReference type="PROSITE" id="PS00767">
    <property type="entry name" value="THF_DHG_CYH_2"/>
    <property type="match status" value="1"/>
</dbReference>
<reference key="1">
    <citation type="journal article" date="2007" name="PLoS ONE">
        <title>Paradoxical DNA repair and peroxide resistance gene conservation in Bacillus pumilus SAFR-032.</title>
        <authorList>
            <person name="Gioia J."/>
            <person name="Yerrapragada S."/>
            <person name="Qin X."/>
            <person name="Jiang H."/>
            <person name="Igboeli O.C."/>
            <person name="Muzny D."/>
            <person name="Dugan-Rocha S."/>
            <person name="Ding Y."/>
            <person name="Hawes A."/>
            <person name="Liu W."/>
            <person name="Perez L."/>
            <person name="Kovar C."/>
            <person name="Dinh H."/>
            <person name="Lee S."/>
            <person name="Nazareth L."/>
            <person name="Blyth P."/>
            <person name="Holder M."/>
            <person name="Buhay C."/>
            <person name="Tirumalai M.R."/>
            <person name="Liu Y."/>
            <person name="Dasgupta I."/>
            <person name="Bokhetache L."/>
            <person name="Fujita M."/>
            <person name="Karouia F."/>
            <person name="Eswara Moorthy P."/>
            <person name="Siefert J."/>
            <person name="Uzman A."/>
            <person name="Buzumbo P."/>
            <person name="Verma A."/>
            <person name="Zwiya H."/>
            <person name="McWilliams B.D."/>
            <person name="Olowu A."/>
            <person name="Clinkenbeard K.D."/>
            <person name="Newcombe D."/>
            <person name="Golebiewski L."/>
            <person name="Petrosino J.F."/>
            <person name="Nicholson W.L."/>
            <person name="Fox G.E."/>
            <person name="Venkateswaran K."/>
            <person name="Highlander S.K."/>
            <person name="Weinstock G.M."/>
        </authorList>
    </citation>
    <scope>NUCLEOTIDE SEQUENCE [LARGE SCALE GENOMIC DNA]</scope>
    <source>
        <strain>SAFR-032</strain>
    </source>
</reference>
<comment type="function">
    <text evidence="1">Catalyzes the oxidation of 5,10-methylenetetrahydrofolate to 5,10-methenyltetrahydrofolate and then the hydrolysis of 5,10-methenyltetrahydrofolate to 10-formyltetrahydrofolate.</text>
</comment>
<comment type="catalytic activity">
    <reaction evidence="1">
        <text>(6R)-5,10-methylene-5,6,7,8-tetrahydrofolate + NADP(+) = (6R)-5,10-methenyltetrahydrofolate + NADPH</text>
        <dbReference type="Rhea" id="RHEA:22812"/>
        <dbReference type="ChEBI" id="CHEBI:15636"/>
        <dbReference type="ChEBI" id="CHEBI:57455"/>
        <dbReference type="ChEBI" id="CHEBI:57783"/>
        <dbReference type="ChEBI" id="CHEBI:58349"/>
        <dbReference type="EC" id="1.5.1.5"/>
    </reaction>
</comment>
<comment type="catalytic activity">
    <reaction evidence="1">
        <text>(6R)-5,10-methenyltetrahydrofolate + H2O = (6R)-10-formyltetrahydrofolate + H(+)</text>
        <dbReference type="Rhea" id="RHEA:23700"/>
        <dbReference type="ChEBI" id="CHEBI:15377"/>
        <dbReference type="ChEBI" id="CHEBI:15378"/>
        <dbReference type="ChEBI" id="CHEBI:57455"/>
        <dbReference type="ChEBI" id="CHEBI:195366"/>
        <dbReference type="EC" id="3.5.4.9"/>
    </reaction>
</comment>
<comment type="pathway">
    <text evidence="1">One-carbon metabolism; tetrahydrofolate interconversion.</text>
</comment>
<comment type="subunit">
    <text evidence="1">Homodimer.</text>
</comment>
<comment type="similarity">
    <text evidence="1">Belongs to the tetrahydrofolate dehydrogenase/cyclohydrolase family.</text>
</comment>
<sequence length="283" mass="30527">MTATIIDGKETAKEKREQLAKEVEELKQKGVTPGLAVILIGDDPASLSYVRGKKKAAEAMGMHFQLDHLDASLTEEELLQLIDQYNANDQFHGILVQLPLPKHISEKAVIERISPEKDVDGFHPLNIGKMLLGEDTFLPCTPAGIVELLNKTGVNLSGKEVVVVGRSNIVGKPVGQLLLNENATVTYCHSRTANISEHTLKADILVVAVGRANFIKADQIKEGAIVIDVGVNRLDTGKLVGDVDFEEAKEKASYITPVPGGVGPMTITMLAHNTVKSAKRTLA</sequence>
<protein>
    <recommendedName>
        <fullName evidence="1">Bifunctional protein FolD</fullName>
    </recommendedName>
    <domain>
        <recommendedName>
            <fullName evidence="1">Methylenetetrahydrofolate dehydrogenase</fullName>
            <ecNumber evidence="1">1.5.1.5</ecNumber>
        </recommendedName>
    </domain>
    <domain>
        <recommendedName>
            <fullName evidence="1">Methenyltetrahydrofolate cyclohydrolase</fullName>
            <ecNumber evidence="1">3.5.4.9</ecNumber>
        </recommendedName>
    </domain>
</protein>
<accession>A8FF15</accession>
<feature type="chain" id="PRO_1000069228" description="Bifunctional protein FolD">
    <location>
        <begin position="1"/>
        <end position="283"/>
    </location>
</feature>
<feature type="binding site" evidence="1">
    <location>
        <begin position="165"/>
        <end position="167"/>
    </location>
    <ligand>
        <name>NADP(+)</name>
        <dbReference type="ChEBI" id="CHEBI:58349"/>
    </ligand>
</feature>
<feature type="binding site" evidence="1">
    <location>
        <position position="190"/>
    </location>
    <ligand>
        <name>NADP(+)</name>
        <dbReference type="ChEBI" id="CHEBI:58349"/>
    </ligand>
</feature>
<feature type="binding site" evidence="1">
    <location>
        <position position="231"/>
    </location>
    <ligand>
        <name>NADP(+)</name>
        <dbReference type="ChEBI" id="CHEBI:58349"/>
    </ligand>
</feature>
<keyword id="KW-0028">Amino-acid biosynthesis</keyword>
<keyword id="KW-0368">Histidine biosynthesis</keyword>
<keyword id="KW-0378">Hydrolase</keyword>
<keyword id="KW-0486">Methionine biosynthesis</keyword>
<keyword id="KW-0511">Multifunctional enzyme</keyword>
<keyword id="KW-0521">NADP</keyword>
<keyword id="KW-0554">One-carbon metabolism</keyword>
<keyword id="KW-0560">Oxidoreductase</keyword>
<keyword id="KW-0658">Purine biosynthesis</keyword>
<proteinExistence type="inferred from homology"/>